<evidence type="ECO:0000255" key="1">
    <source>
        <dbReference type="HAMAP-Rule" id="MF_01582"/>
    </source>
</evidence>
<evidence type="ECO:0000305" key="2"/>
<organism>
    <name type="scientific">Desulfotalea psychrophila (strain LSv54 / DSM 12343)</name>
    <dbReference type="NCBI Taxonomy" id="177439"/>
    <lineage>
        <taxon>Bacteria</taxon>
        <taxon>Pseudomonadati</taxon>
        <taxon>Thermodesulfobacteriota</taxon>
        <taxon>Desulfobulbia</taxon>
        <taxon>Desulfobulbales</taxon>
        <taxon>Desulfocapsaceae</taxon>
        <taxon>Desulfotalea</taxon>
    </lineage>
</organism>
<gene>
    <name evidence="1" type="primary">sstT</name>
    <name type="ordered locus">DP0138</name>
</gene>
<accession>Q6AS08</accession>
<proteinExistence type="inferred from homology"/>
<feature type="chain" id="PRO_0000309083" description="Serine/threonine transporter SstT">
    <location>
        <begin position="1"/>
        <end position="404"/>
    </location>
</feature>
<feature type="transmembrane region" description="Helical" evidence="1">
    <location>
        <begin position="11"/>
        <end position="31"/>
    </location>
</feature>
<feature type="transmembrane region" description="Helical" evidence="1">
    <location>
        <begin position="44"/>
        <end position="64"/>
    </location>
</feature>
<feature type="transmembrane region" description="Helical" evidence="1">
    <location>
        <begin position="82"/>
        <end position="102"/>
    </location>
</feature>
<feature type="transmembrane region" description="Helical" evidence="1">
    <location>
        <begin position="144"/>
        <end position="164"/>
    </location>
</feature>
<feature type="transmembrane region" description="Helical" evidence="1">
    <location>
        <begin position="179"/>
        <end position="199"/>
    </location>
</feature>
<feature type="transmembrane region" description="Helical" evidence="1">
    <location>
        <begin position="218"/>
        <end position="238"/>
    </location>
</feature>
<feature type="transmembrane region" description="Helical" evidence="1">
    <location>
        <begin position="290"/>
        <end position="310"/>
    </location>
</feature>
<feature type="transmembrane region" description="Helical" evidence="1">
    <location>
        <begin position="316"/>
        <end position="336"/>
    </location>
</feature>
<feature type="transmembrane region" description="Helical" evidence="1">
    <location>
        <begin position="363"/>
        <end position="383"/>
    </location>
</feature>
<sequence>MEQNNSLFSRIINANLVLQIIFGIAAGIILATVSHDLAKSAATLGGLFVGALKAVAPILVFVLVASSIANQKKGSNTNMRPIISLYLIGTLLAALTAVTMSFAFPTTLVLVTGAEGAAPPQGIIEVLRTLVFKIVDNPINALRTANYIGILAWAIGLGIALHHASQNTKDVLSDMSHGVSFIVRFIIRLAPIGIFGLVANTIAETGFSALGGYASLLGVLLGSMAIVALVINPLMVFIKIRKNPYPLVFTCLRESGVTAFFTRSSAANIPVNMTLCEKLNIHEDSYSVSIPLGATINMAGAAITITVLTLAAVNTMGIQVDMFTALLLSVVAAISACGASGVAGGSLLLIPLACGLFGISNDVAMQVVGVGFIIGVIQDSAETGLNSSTDVLFTAACHRARERS</sequence>
<comment type="function">
    <text evidence="1">Involved in the import of serine and threonine into the cell, with the concomitant import of sodium (symport system).</text>
</comment>
<comment type="catalytic activity">
    <reaction evidence="1">
        <text>L-serine(in) + Na(+)(in) = L-serine(out) + Na(+)(out)</text>
        <dbReference type="Rhea" id="RHEA:29575"/>
        <dbReference type="ChEBI" id="CHEBI:29101"/>
        <dbReference type="ChEBI" id="CHEBI:33384"/>
    </reaction>
    <physiologicalReaction direction="right-to-left" evidence="1">
        <dbReference type="Rhea" id="RHEA:29577"/>
    </physiologicalReaction>
</comment>
<comment type="catalytic activity">
    <reaction evidence="1">
        <text>L-threonine(in) + Na(+)(in) = L-threonine(out) + Na(+)(out)</text>
        <dbReference type="Rhea" id="RHEA:69999"/>
        <dbReference type="ChEBI" id="CHEBI:29101"/>
        <dbReference type="ChEBI" id="CHEBI:57926"/>
    </reaction>
    <physiologicalReaction direction="right-to-left" evidence="1">
        <dbReference type="Rhea" id="RHEA:70001"/>
    </physiologicalReaction>
</comment>
<comment type="subcellular location">
    <subcellularLocation>
        <location evidence="1">Cell inner membrane</location>
        <topology evidence="1">Multi-pass membrane protein</topology>
    </subcellularLocation>
</comment>
<comment type="similarity">
    <text evidence="1">Belongs to the dicarboxylate/amino acid:cation symporter (DAACS) (TC 2.A.23) family.</text>
</comment>
<comment type="sequence caution" evidence="2">
    <conflict type="erroneous initiation">
        <sequence resource="EMBL-CDS" id="CAG34867"/>
    </conflict>
</comment>
<keyword id="KW-0029">Amino-acid transport</keyword>
<keyword id="KW-0997">Cell inner membrane</keyword>
<keyword id="KW-1003">Cell membrane</keyword>
<keyword id="KW-0472">Membrane</keyword>
<keyword id="KW-1185">Reference proteome</keyword>
<keyword id="KW-0769">Symport</keyword>
<keyword id="KW-0812">Transmembrane</keyword>
<keyword id="KW-1133">Transmembrane helix</keyword>
<keyword id="KW-0813">Transport</keyword>
<protein>
    <recommendedName>
        <fullName evidence="1">Serine/threonine transporter SstT</fullName>
    </recommendedName>
    <alternativeName>
        <fullName evidence="1">Na(+)/serine-threonine symporter</fullName>
    </alternativeName>
</protein>
<reference key="1">
    <citation type="journal article" date="2004" name="Environ. Microbiol.">
        <title>The genome of Desulfotalea psychrophila, a sulfate-reducing bacterium from permanently cold Arctic sediments.</title>
        <authorList>
            <person name="Rabus R."/>
            <person name="Ruepp A."/>
            <person name="Frickey T."/>
            <person name="Rattei T."/>
            <person name="Fartmann B."/>
            <person name="Stark M."/>
            <person name="Bauer M."/>
            <person name="Zibat A."/>
            <person name="Lombardot T."/>
            <person name="Becker I."/>
            <person name="Amann J."/>
            <person name="Gellner K."/>
            <person name="Teeling H."/>
            <person name="Leuschner W.D."/>
            <person name="Gloeckner F.-O."/>
            <person name="Lupas A.N."/>
            <person name="Amann R."/>
            <person name="Klenk H.-P."/>
        </authorList>
    </citation>
    <scope>NUCLEOTIDE SEQUENCE [LARGE SCALE GENOMIC DNA]</scope>
    <source>
        <strain>DSM 12343 / LSv54</strain>
    </source>
</reference>
<name>SSTT_DESPS</name>
<dbReference type="EMBL" id="CR522870">
    <property type="protein sequence ID" value="CAG34867.1"/>
    <property type="status" value="ALT_INIT"/>
    <property type="molecule type" value="Genomic_DNA"/>
</dbReference>
<dbReference type="RefSeq" id="WP_041277444.1">
    <property type="nucleotide sequence ID" value="NC_006138.1"/>
</dbReference>
<dbReference type="SMR" id="Q6AS08"/>
<dbReference type="STRING" id="177439.DP0138"/>
<dbReference type="KEGG" id="dps:DP0138"/>
<dbReference type="eggNOG" id="COG3633">
    <property type="taxonomic scope" value="Bacteria"/>
</dbReference>
<dbReference type="HOGENOM" id="CLU_044581_0_0_7"/>
<dbReference type="OrthoDB" id="9766690at2"/>
<dbReference type="Proteomes" id="UP000000602">
    <property type="component" value="Chromosome"/>
</dbReference>
<dbReference type="GO" id="GO:0005886">
    <property type="term" value="C:plasma membrane"/>
    <property type="evidence" value="ECO:0007669"/>
    <property type="project" value="UniProtKB-SubCell"/>
</dbReference>
<dbReference type="GO" id="GO:0005295">
    <property type="term" value="F:neutral L-amino acid:sodium symporter activity"/>
    <property type="evidence" value="ECO:0007669"/>
    <property type="project" value="TreeGrafter"/>
</dbReference>
<dbReference type="GO" id="GO:0032329">
    <property type="term" value="P:serine transport"/>
    <property type="evidence" value="ECO:0007669"/>
    <property type="project" value="InterPro"/>
</dbReference>
<dbReference type="GO" id="GO:0015826">
    <property type="term" value="P:threonine transport"/>
    <property type="evidence" value="ECO:0007669"/>
    <property type="project" value="InterPro"/>
</dbReference>
<dbReference type="FunFam" id="1.10.3860.10:FF:000003">
    <property type="entry name" value="Serine/threonine transporter sstT"/>
    <property type="match status" value="1"/>
</dbReference>
<dbReference type="Gene3D" id="1.10.3860.10">
    <property type="entry name" value="Sodium:dicarboxylate symporter"/>
    <property type="match status" value="1"/>
</dbReference>
<dbReference type="HAMAP" id="MF_01582">
    <property type="entry name" value="Ser_Thr_transp_SstT"/>
    <property type="match status" value="1"/>
</dbReference>
<dbReference type="InterPro" id="IPR001991">
    <property type="entry name" value="Na-dicarboxylate_symporter"/>
</dbReference>
<dbReference type="InterPro" id="IPR036458">
    <property type="entry name" value="Na:dicarbo_symporter_sf"/>
</dbReference>
<dbReference type="InterPro" id="IPR023025">
    <property type="entry name" value="Ser_Thr_transp_SstT"/>
</dbReference>
<dbReference type="NCBIfam" id="NF010151">
    <property type="entry name" value="PRK13628.1"/>
    <property type="match status" value="1"/>
</dbReference>
<dbReference type="PANTHER" id="PTHR42865">
    <property type="entry name" value="PROTON/GLUTAMATE-ASPARTATE SYMPORTER"/>
    <property type="match status" value="1"/>
</dbReference>
<dbReference type="PANTHER" id="PTHR42865:SF8">
    <property type="entry name" value="SERINE_THREONINE TRANSPORTER SSTT"/>
    <property type="match status" value="1"/>
</dbReference>
<dbReference type="Pfam" id="PF00375">
    <property type="entry name" value="SDF"/>
    <property type="match status" value="1"/>
</dbReference>
<dbReference type="PRINTS" id="PR00173">
    <property type="entry name" value="EDTRNSPORT"/>
</dbReference>
<dbReference type="SUPFAM" id="SSF118215">
    <property type="entry name" value="Proton glutamate symport protein"/>
    <property type="match status" value="1"/>
</dbReference>